<evidence type="ECO:0000250" key="1">
    <source>
        <dbReference type="UniProtKB" id="P07314"/>
    </source>
</evidence>
<evidence type="ECO:0000250" key="2">
    <source>
        <dbReference type="UniProtKB" id="P19440"/>
    </source>
</evidence>
<evidence type="ECO:0000255" key="3"/>
<evidence type="ECO:0000256" key="4">
    <source>
        <dbReference type="SAM" id="MobiDB-lite"/>
    </source>
</evidence>
<evidence type="ECO:0000305" key="5"/>
<evidence type="ECO:0000312" key="6">
    <source>
        <dbReference type="MGI" id="MGI:1918772"/>
    </source>
</evidence>
<organism>
    <name type="scientific">Mus musculus</name>
    <name type="common">Mouse</name>
    <dbReference type="NCBI Taxonomy" id="10090"/>
    <lineage>
        <taxon>Eukaryota</taxon>
        <taxon>Metazoa</taxon>
        <taxon>Chordata</taxon>
        <taxon>Craniata</taxon>
        <taxon>Vertebrata</taxon>
        <taxon>Euteleostomi</taxon>
        <taxon>Mammalia</taxon>
        <taxon>Eutheria</taxon>
        <taxon>Euarchontoglires</taxon>
        <taxon>Glires</taxon>
        <taxon>Rodentia</taxon>
        <taxon>Myomorpha</taxon>
        <taxon>Muroidea</taxon>
        <taxon>Muridae</taxon>
        <taxon>Murinae</taxon>
        <taxon>Mus</taxon>
        <taxon>Mus</taxon>
    </lineage>
</organism>
<proteinExistence type="evidence at transcript level"/>
<feature type="chain" id="PRO_0000314956" description="Glutathione hydrolase 6 heavy chain">
    <location>
        <begin position="1"/>
        <end status="unknown"/>
    </location>
</feature>
<feature type="chain" id="PRO_0000314957" description="Glutathione hydrolase 6 light chain">
    <location>
        <begin status="unknown"/>
        <end position="497"/>
    </location>
</feature>
<feature type="topological domain" description="Cytoplasmic" evidence="1">
    <location>
        <begin position="1"/>
        <end position="51"/>
    </location>
</feature>
<feature type="transmembrane region" description="Helical; Signal-anchor for type II membrane protein" evidence="3">
    <location>
        <begin position="52"/>
        <end position="72"/>
    </location>
</feature>
<feature type="topological domain" description="Extracellular" evidence="1">
    <location>
        <begin position="73"/>
        <end position="497"/>
    </location>
</feature>
<feature type="region of interest" description="Disordered" evidence="4">
    <location>
        <begin position="1"/>
        <end position="34"/>
    </location>
</feature>
<feature type="compositionally biased region" description="Acidic residues" evidence="4">
    <location>
        <begin position="20"/>
        <end position="34"/>
    </location>
</feature>
<feature type="glycosylation site" description="N-linked (GlcNAc...) asparagine" evidence="3">
    <location>
        <position position="164"/>
    </location>
</feature>
<feature type="glycosylation site" description="N-linked (GlcNAc...) asparagine" evidence="3">
    <location>
        <position position="169"/>
    </location>
</feature>
<feature type="glycosylation site" description="N-linked (GlcNAc...) asparagine" evidence="3">
    <location>
        <position position="367"/>
    </location>
</feature>
<feature type="glycosylation site" description="N-linked (GlcNAc...) asparagine" evidence="3">
    <location>
        <position position="378"/>
    </location>
</feature>
<feature type="splice variant" id="VSP_030452" description="In isoform 2." evidence="5">
    <location>
        <begin position="117"/>
        <end position="154"/>
    </location>
</feature>
<feature type="sequence conflict" description="In Ref. 1; BAB31233." evidence="5" ref="1">
    <original>E</original>
    <variation>K</variation>
    <location>
        <position position="304"/>
    </location>
</feature>
<feature type="sequence conflict" description="In Ref. 1; BAB31233." evidence="5" ref="1">
    <original>VLFTT</original>
    <variation>GLLTN</variation>
    <location>
        <begin position="315"/>
        <end position="319"/>
    </location>
</feature>
<feature type="sequence conflict" description="In Ref. 1; BAB31233." evidence="5" ref="1">
    <original>V</original>
    <variation>G</variation>
    <location>
        <position position="329"/>
    </location>
</feature>
<feature type="sequence conflict" description="In Ref. 1; BAB31233." evidence="5" ref="1">
    <original>S</original>
    <variation>F</variation>
    <location>
        <position position="334"/>
    </location>
</feature>
<feature type="sequence conflict" description="In Ref. 1; BAB31233." evidence="5" ref="1">
    <original>R</original>
    <variation>G</variation>
    <location>
        <position position="339"/>
    </location>
</feature>
<feature type="sequence conflict" description="In Ref. 1; BAB31233." evidence="5" ref="1">
    <original>S</original>
    <variation>F</variation>
    <location>
        <position position="343"/>
    </location>
</feature>
<keyword id="KW-0012">Acyltransferase</keyword>
<keyword id="KW-0025">Alternative splicing</keyword>
<keyword id="KW-0317">Glutathione biosynthesis</keyword>
<keyword id="KW-0325">Glycoprotein</keyword>
<keyword id="KW-0378">Hydrolase</keyword>
<keyword id="KW-0472">Membrane</keyword>
<keyword id="KW-1185">Reference proteome</keyword>
<keyword id="KW-0735">Signal-anchor</keyword>
<keyword id="KW-0808">Transferase</keyword>
<keyword id="KW-0812">Transmembrane</keyword>
<keyword id="KW-1133">Transmembrane helix</keyword>
<keyword id="KW-0865">Zymogen</keyword>
<accession>Q6PDE7</accession>
<accession>Q5F245</accession>
<accession>Q9D347</accession>
<gene>
    <name evidence="6" type="primary">Ggt6</name>
</gene>
<name>GGT6_MOUSE</name>
<reference key="1">
    <citation type="journal article" date="2005" name="Science">
        <title>The transcriptional landscape of the mammalian genome.</title>
        <authorList>
            <person name="Carninci P."/>
            <person name="Kasukawa T."/>
            <person name="Katayama S."/>
            <person name="Gough J."/>
            <person name="Frith M.C."/>
            <person name="Maeda N."/>
            <person name="Oyama R."/>
            <person name="Ravasi T."/>
            <person name="Lenhard B."/>
            <person name="Wells C."/>
            <person name="Kodzius R."/>
            <person name="Shimokawa K."/>
            <person name="Bajic V.B."/>
            <person name="Brenner S.E."/>
            <person name="Batalov S."/>
            <person name="Forrest A.R."/>
            <person name="Zavolan M."/>
            <person name="Davis M.J."/>
            <person name="Wilming L.G."/>
            <person name="Aidinis V."/>
            <person name="Allen J.E."/>
            <person name="Ambesi-Impiombato A."/>
            <person name="Apweiler R."/>
            <person name="Aturaliya R.N."/>
            <person name="Bailey T.L."/>
            <person name="Bansal M."/>
            <person name="Baxter L."/>
            <person name="Beisel K.W."/>
            <person name="Bersano T."/>
            <person name="Bono H."/>
            <person name="Chalk A.M."/>
            <person name="Chiu K.P."/>
            <person name="Choudhary V."/>
            <person name="Christoffels A."/>
            <person name="Clutterbuck D.R."/>
            <person name="Crowe M.L."/>
            <person name="Dalla E."/>
            <person name="Dalrymple B.P."/>
            <person name="de Bono B."/>
            <person name="Della Gatta G."/>
            <person name="di Bernardo D."/>
            <person name="Down T."/>
            <person name="Engstrom P."/>
            <person name="Fagiolini M."/>
            <person name="Faulkner G."/>
            <person name="Fletcher C.F."/>
            <person name="Fukushima T."/>
            <person name="Furuno M."/>
            <person name="Futaki S."/>
            <person name="Gariboldi M."/>
            <person name="Georgii-Hemming P."/>
            <person name="Gingeras T.R."/>
            <person name="Gojobori T."/>
            <person name="Green R.E."/>
            <person name="Gustincich S."/>
            <person name="Harbers M."/>
            <person name="Hayashi Y."/>
            <person name="Hensch T.K."/>
            <person name="Hirokawa N."/>
            <person name="Hill D."/>
            <person name="Huminiecki L."/>
            <person name="Iacono M."/>
            <person name="Ikeo K."/>
            <person name="Iwama A."/>
            <person name="Ishikawa T."/>
            <person name="Jakt M."/>
            <person name="Kanapin A."/>
            <person name="Katoh M."/>
            <person name="Kawasawa Y."/>
            <person name="Kelso J."/>
            <person name="Kitamura H."/>
            <person name="Kitano H."/>
            <person name="Kollias G."/>
            <person name="Krishnan S.P."/>
            <person name="Kruger A."/>
            <person name="Kummerfeld S.K."/>
            <person name="Kurochkin I.V."/>
            <person name="Lareau L.F."/>
            <person name="Lazarevic D."/>
            <person name="Lipovich L."/>
            <person name="Liu J."/>
            <person name="Liuni S."/>
            <person name="McWilliam S."/>
            <person name="Madan Babu M."/>
            <person name="Madera M."/>
            <person name="Marchionni L."/>
            <person name="Matsuda H."/>
            <person name="Matsuzawa S."/>
            <person name="Miki H."/>
            <person name="Mignone F."/>
            <person name="Miyake S."/>
            <person name="Morris K."/>
            <person name="Mottagui-Tabar S."/>
            <person name="Mulder N."/>
            <person name="Nakano N."/>
            <person name="Nakauchi H."/>
            <person name="Ng P."/>
            <person name="Nilsson R."/>
            <person name="Nishiguchi S."/>
            <person name="Nishikawa S."/>
            <person name="Nori F."/>
            <person name="Ohara O."/>
            <person name="Okazaki Y."/>
            <person name="Orlando V."/>
            <person name="Pang K.C."/>
            <person name="Pavan W.J."/>
            <person name="Pavesi G."/>
            <person name="Pesole G."/>
            <person name="Petrovsky N."/>
            <person name="Piazza S."/>
            <person name="Reed J."/>
            <person name="Reid J.F."/>
            <person name="Ring B.Z."/>
            <person name="Ringwald M."/>
            <person name="Rost B."/>
            <person name="Ruan Y."/>
            <person name="Salzberg S.L."/>
            <person name="Sandelin A."/>
            <person name="Schneider C."/>
            <person name="Schoenbach C."/>
            <person name="Sekiguchi K."/>
            <person name="Semple C.A."/>
            <person name="Seno S."/>
            <person name="Sessa L."/>
            <person name="Sheng Y."/>
            <person name="Shibata Y."/>
            <person name="Shimada H."/>
            <person name="Shimada K."/>
            <person name="Silva D."/>
            <person name="Sinclair B."/>
            <person name="Sperling S."/>
            <person name="Stupka E."/>
            <person name="Sugiura K."/>
            <person name="Sultana R."/>
            <person name="Takenaka Y."/>
            <person name="Taki K."/>
            <person name="Tammoja K."/>
            <person name="Tan S.L."/>
            <person name="Tang S."/>
            <person name="Taylor M.S."/>
            <person name="Tegner J."/>
            <person name="Teichmann S.A."/>
            <person name="Ueda H.R."/>
            <person name="van Nimwegen E."/>
            <person name="Verardo R."/>
            <person name="Wei C.L."/>
            <person name="Yagi K."/>
            <person name="Yamanishi H."/>
            <person name="Zabarovsky E."/>
            <person name="Zhu S."/>
            <person name="Zimmer A."/>
            <person name="Hide W."/>
            <person name="Bult C."/>
            <person name="Grimmond S.M."/>
            <person name="Teasdale R.D."/>
            <person name="Liu E.T."/>
            <person name="Brusic V."/>
            <person name="Quackenbush J."/>
            <person name="Wahlestedt C."/>
            <person name="Mattick J.S."/>
            <person name="Hume D.A."/>
            <person name="Kai C."/>
            <person name="Sasaki D."/>
            <person name="Tomaru Y."/>
            <person name="Fukuda S."/>
            <person name="Kanamori-Katayama M."/>
            <person name="Suzuki M."/>
            <person name="Aoki J."/>
            <person name="Arakawa T."/>
            <person name="Iida J."/>
            <person name="Imamura K."/>
            <person name="Itoh M."/>
            <person name="Kato T."/>
            <person name="Kawaji H."/>
            <person name="Kawagashira N."/>
            <person name="Kawashima T."/>
            <person name="Kojima M."/>
            <person name="Kondo S."/>
            <person name="Konno H."/>
            <person name="Nakano K."/>
            <person name="Ninomiya N."/>
            <person name="Nishio T."/>
            <person name="Okada M."/>
            <person name="Plessy C."/>
            <person name="Shibata K."/>
            <person name="Shiraki T."/>
            <person name="Suzuki S."/>
            <person name="Tagami M."/>
            <person name="Waki K."/>
            <person name="Watahiki A."/>
            <person name="Okamura-Oho Y."/>
            <person name="Suzuki H."/>
            <person name="Kawai J."/>
            <person name="Hayashizaki Y."/>
        </authorList>
    </citation>
    <scope>NUCLEOTIDE SEQUENCE [LARGE SCALE MRNA] (ISOFORM 1)</scope>
    <source>
        <strain>C57BL/6J</strain>
        <tissue>Colon</tissue>
    </source>
</reference>
<reference key="2">
    <citation type="journal article" date="2009" name="PLoS Biol.">
        <title>Lineage-specific biology revealed by a finished genome assembly of the mouse.</title>
        <authorList>
            <person name="Church D.M."/>
            <person name="Goodstadt L."/>
            <person name="Hillier L.W."/>
            <person name="Zody M.C."/>
            <person name="Goldstein S."/>
            <person name="She X."/>
            <person name="Bult C.J."/>
            <person name="Agarwala R."/>
            <person name="Cherry J.L."/>
            <person name="DiCuccio M."/>
            <person name="Hlavina W."/>
            <person name="Kapustin Y."/>
            <person name="Meric P."/>
            <person name="Maglott D."/>
            <person name="Birtle Z."/>
            <person name="Marques A.C."/>
            <person name="Graves T."/>
            <person name="Zhou S."/>
            <person name="Teague B."/>
            <person name="Potamousis K."/>
            <person name="Churas C."/>
            <person name="Place M."/>
            <person name="Herschleb J."/>
            <person name="Runnheim R."/>
            <person name="Forrest D."/>
            <person name="Amos-Landgraf J."/>
            <person name="Schwartz D.C."/>
            <person name="Cheng Z."/>
            <person name="Lindblad-Toh K."/>
            <person name="Eichler E.E."/>
            <person name="Ponting C.P."/>
        </authorList>
    </citation>
    <scope>NUCLEOTIDE SEQUENCE [LARGE SCALE GENOMIC DNA]</scope>
    <source>
        <strain>C57BL/6J</strain>
    </source>
</reference>
<reference key="3">
    <citation type="journal article" date="2004" name="Genome Res.">
        <title>The status, quality, and expansion of the NIH full-length cDNA project: the Mammalian Gene Collection (MGC).</title>
        <authorList>
            <consortium name="The MGC Project Team"/>
        </authorList>
    </citation>
    <scope>NUCLEOTIDE SEQUENCE [LARGE SCALE MRNA] (ISOFORM 1)</scope>
    <source>
        <strain>FVB/N</strain>
        <tissue>Colon</tissue>
    </source>
</reference>
<sequence>MDATTGPVHYHKLQLWEPGVESEEEEEEEEEEIAEPLVLSLRRLQNTPRNEVGGLPGAWARLLAGLLLLAVSSSLALRQLHSRDSPRGNLGSVAPPASRHSHRPGVYHHSAIISPAATCSQLGQELLVAGGNVVDAGVGAALCLAVVHPHATGLGATFWGLFYNSSSGNSTALTAGPTQLLAPGLGLPTGLPALHLLHAHFGRLPWPHLLTKPAMLAEKGFEVDAPLANALAIQGTKGLCPLFCHTNGTPLGLGARATNPNLAAVLRSAALASSPDLAGKALLNPLVRDLGLELPSAQPVPSLEPALQLLLPRGVLFTTPGPSAGPELVELLESTLHSRTPSSAPCPPFLQTAETPVSSALATVDSNGSMLLLISSINSSFGSGHLSPSTGVLLSNLEASPAPSAWACPLILRDNLDDTEADMLGMVASGISRGAKAMTCTLLNHLATPQIPQQPQHQRPTESPGICGQGALLQAVVHAEHAHVSSVPSGCCPFQGY</sequence>
<dbReference type="EC" id="3.4.19.13" evidence="2"/>
<dbReference type="EC" id="2.3.2.2" evidence="2"/>
<dbReference type="EMBL" id="AK018485">
    <property type="protein sequence ID" value="BAB31233.1"/>
    <property type="status" value="ALT_SEQ"/>
    <property type="molecule type" value="mRNA"/>
</dbReference>
<dbReference type="EMBL" id="AL662812">
    <property type="status" value="NOT_ANNOTATED_CDS"/>
    <property type="molecule type" value="Genomic_DNA"/>
</dbReference>
<dbReference type="EMBL" id="BC058747">
    <property type="protein sequence ID" value="AAH58747.1"/>
    <property type="molecule type" value="mRNA"/>
</dbReference>
<dbReference type="CCDS" id="CCDS36216.1">
    <molecule id="Q6PDE7-1"/>
</dbReference>
<dbReference type="RefSeq" id="NP_082095.2">
    <molecule id="Q6PDE7-1"/>
    <property type="nucleotide sequence ID" value="NM_027819.3"/>
</dbReference>
<dbReference type="RefSeq" id="XP_006534305.1">
    <property type="nucleotide sequence ID" value="XM_006534242.3"/>
</dbReference>
<dbReference type="SMR" id="Q6PDE7"/>
<dbReference type="FunCoup" id="Q6PDE7">
    <property type="interactions" value="119"/>
</dbReference>
<dbReference type="STRING" id="10090.ENSMUSP00000075773"/>
<dbReference type="MEROPS" id="T03.022"/>
<dbReference type="GlyCosmos" id="Q6PDE7">
    <property type="glycosylation" value="4 sites, No reported glycans"/>
</dbReference>
<dbReference type="GlyGen" id="Q6PDE7">
    <property type="glycosylation" value="4 sites"/>
</dbReference>
<dbReference type="iPTMnet" id="Q6PDE7"/>
<dbReference type="PhosphoSitePlus" id="Q6PDE7"/>
<dbReference type="PaxDb" id="10090-ENSMUSP00000075773"/>
<dbReference type="PeptideAtlas" id="Q6PDE7"/>
<dbReference type="ProteomicsDB" id="266805">
    <molecule id="Q6PDE7-1"/>
</dbReference>
<dbReference type="ProteomicsDB" id="266806">
    <molecule id="Q6PDE7-2"/>
</dbReference>
<dbReference type="Antibodypedia" id="11242">
    <property type="antibodies" value="119 antibodies from 16 providers"/>
</dbReference>
<dbReference type="DNASU" id="71522"/>
<dbReference type="Ensembl" id="ENSMUST00000076443.10">
    <molecule id="Q6PDE7-1"/>
    <property type="protein sequence ID" value="ENSMUSP00000075773.4"/>
    <property type="gene ID" value="ENSMUSG00000040471.18"/>
</dbReference>
<dbReference type="Ensembl" id="ENSMUST00000100903.3">
    <molecule id="Q6PDE7-2"/>
    <property type="protein sequence ID" value="ENSMUSP00000098463.3"/>
    <property type="gene ID" value="ENSMUSG00000040471.18"/>
</dbReference>
<dbReference type="GeneID" id="71522"/>
<dbReference type="KEGG" id="mmu:71522"/>
<dbReference type="UCSC" id="uc007jyw.1">
    <molecule id="Q6PDE7-1"/>
    <property type="organism name" value="mouse"/>
</dbReference>
<dbReference type="AGR" id="MGI:1918772"/>
<dbReference type="CTD" id="124975"/>
<dbReference type="MGI" id="MGI:1918772">
    <property type="gene designation" value="Ggt6"/>
</dbReference>
<dbReference type="VEuPathDB" id="HostDB:ENSMUSG00000040471"/>
<dbReference type="eggNOG" id="KOG2410">
    <property type="taxonomic scope" value="Eukaryota"/>
</dbReference>
<dbReference type="GeneTree" id="ENSGT00940000161883"/>
<dbReference type="HOGENOM" id="CLU_049993_0_0_1"/>
<dbReference type="InParanoid" id="Q6PDE7"/>
<dbReference type="OMA" id="CLVVVHP"/>
<dbReference type="OrthoDB" id="1081007at2759"/>
<dbReference type="PhylomeDB" id="Q6PDE7"/>
<dbReference type="TreeFam" id="TF338758"/>
<dbReference type="Reactome" id="R-MMU-174403">
    <property type="pathway name" value="Glutathione synthesis and recycling"/>
</dbReference>
<dbReference type="Reactome" id="R-MMU-5423646">
    <property type="pathway name" value="Aflatoxin activation and detoxification"/>
</dbReference>
<dbReference type="Reactome" id="R-MMU-9753281">
    <property type="pathway name" value="Paracetamol ADME"/>
</dbReference>
<dbReference type="SABIO-RK" id="Q6PDE7"/>
<dbReference type="UniPathway" id="UPA00204"/>
<dbReference type="BioGRID-ORCS" id="71522">
    <property type="hits" value="4 hits in 78 CRISPR screens"/>
</dbReference>
<dbReference type="PRO" id="PR:Q6PDE7"/>
<dbReference type="Proteomes" id="UP000000589">
    <property type="component" value="Chromosome 11"/>
</dbReference>
<dbReference type="RNAct" id="Q6PDE7">
    <property type="molecule type" value="protein"/>
</dbReference>
<dbReference type="Bgee" id="ENSMUSG00000040471">
    <property type="expression patterns" value="Expressed in lip and 56 other cell types or tissues"/>
</dbReference>
<dbReference type="ExpressionAtlas" id="Q6PDE7">
    <property type="expression patterns" value="baseline and differential"/>
</dbReference>
<dbReference type="GO" id="GO:0016020">
    <property type="term" value="C:membrane"/>
    <property type="evidence" value="ECO:0007669"/>
    <property type="project" value="UniProtKB-SubCell"/>
</dbReference>
<dbReference type="GO" id="GO:0036374">
    <property type="term" value="F:glutathione hydrolase activity"/>
    <property type="evidence" value="ECO:0007669"/>
    <property type="project" value="UniProtKB-EC"/>
</dbReference>
<dbReference type="GO" id="GO:0103068">
    <property type="term" value="F:leukotriene C4 gamma-glutamyl transferase activity"/>
    <property type="evidence" value="ECO:0007669"/>
    <property type="project" value="UniProtKB-EC"/>
</dbReference>
<dbReference type="GO" id="GO:0006750">
    <property type="term" value="P:glutathione biosynthetic process"/>
    <property type="evidence" value="ECO:0007669"/>
    <property type="project" value="UniProtKB-KW"/>
</dbReference>
<dbReference type="Gene3D" id="3.60.20.40">
    <property type="match status" value="1"/>
</dbReference>
<dbReference type="InterPro" id="IPR052688">
    <property type="entry name" value="Gamma-glutamyltransfase"/>
</dbReference>
<dbReference type="InterPro" id="IPR043137">
    <property type="entry name" value="GGT_ssub"/>
</dbReference>
<dbReference type="InterPro" id="IPR029055">
    <property type="entry name" value="Ntn_hydrolases_N"/>
</dbReference>
<dbReference type="PANTHER" id="PTHR47278">
    <property type="entry name" value="GLUTATHIONE HYDROLASE 6"/>
    <property type="match status" value="1"/>
</dbReference>
<dbReference type="PANTHER" id="PTHR47278:SF1">
    <property type="entry name" value="GLUTATHIONE HYDROLASE 6"/>
    <property type="match status" value="1"/>
</dbReference>
<dbReference type="Pfam" id="PF01019">
    <property type="entry name" value="G_glu_transpept"/>
    <property type="match status" value="3"/>
</dbReference>
<dbReference type="PRINTS" id="PR01210">
    <property type="entry name" value="GGTRANSPTASE"/>
</dbReference>
<dbReference type="SUPFAM" id="SSF56235">
    <property type="entry name" value="N-terminal nucleophile aminohydrolases (Ntn hydrolases)"/>
    <property type="match status" value="1"/>
</dbReference>
<protein>
    <recommendedName>
        <fullName evidence="5">Glutathione hydrolase 6</fullName>
        <ecNumber evidence="2">3.4.19.13</ecNumber>
    </recommendedName>
    <alternativeName>
        <fullName>Gamma-glutamyltransferase 6</fullName>
        <shortName>GGT 6</shortName>
        <ecNumber evidence="2">2.3.2.2</ecNumber>
    </alternativeName>
    <alternativeName>
        <fullName>Gamma-glutamyltranspeptidase 6</fullName>
    </alternativeName>
    <component>
        <recommendedName>
            <fullName>Glutathione hydrolase 6 heavy chain</fullName>
        </recommendedName>
    </component>
    <component>
        <recommendedName>
            <fullName>Glutathione hydrolase 6 light chain</fullName>
        </recommendedName>
    </component>
</protein>
<comment type="function">
    <text evidence="2">Hydrolyzes and transfers gamma-glutamyl moieties from glutathione and other gamma-glutamyl compounds to acceptors.</text>
</comment>
<comment type="catalytic activity">
    <reaction evidence="2">
        <text>an N-terminal (5-L-glutamyl)-[peptide] + an alpha-amino acid = 5-L-glutamyl amino acid + an N-terminal L-alpha-aminoacyl-[peptide]</text>
        <dbReference type="Rhea" id="RHEA:23904"/>
        <dbReference type="Rhea" id="RHEA-COMP:9780"/>
        <dbReference type="Rhea" id="RHEA-COMP:9795"/>
        <dbReference type="ChEBI" id="CHEBI:77644"/>
        <dbReference type="ChEBI" id="CHEBI:78597"/>
        <dbReference type="ChEBI" id="CHEBI:78599"/>
        <dbReference type="ChEBI" id="CHEBI:78608"/>
        <dbReference type="EC" id="2.3.2.2"/>
    </reaction>
    <physiologicalReaction direction="left-to-right" evidence="2">
        <dbReference type="Rhea" id="RHEA:23905"/>
    </physiologicalReaction>
</comment>
<comment type="catalytic activity">
    <reaction evidence="2">
        <text>glutathione + H2O = L-cysteinylglycine + L-glutamate</text>
        <dbReference type="Rhea" id="RHEA:28807"/>
        <dbReference type="ChEBI" id="CHEBI:15377"/>
        <dbReference type="ChEBI" id="CHEBI:29985"/>
        <dbReference type="ChEBI" id="CHEBI:57925"/>
        <dbReference type="ChEBI" id="CHEBI:61694"/>
        <dbReference type="EC" id="3.4.19.13"/>
    </reaction>
    <physiologicalReaction direction="left-to-right" evidence="2">
        <dbReference type="Rhea" id="RHEA:28808"/>
    </physiologicalReaction>
</comment>
<comment type="catalytic activity">
    <reaction evidence="2">
        <text>an S-substituted glutathione + H2O = an S-substituted L-cysteinylglycine + L-glutamate</text>
        <dbReference type="Rhea" id="RHEA:59468"/>
        <dbReference type="ChEBI" id="CHEBI:15377"/>
        <dbReference type="ChEBI" id="CHEBI:29985"/>
        <dbReference type="ChEBI" id="CHEBI:90779"/>
        <dbReference type="ChEBI" id="CHEBI:143103"/>
        <dbReference type="EC" id="3.4.19.13"/>
    </reaction>
    <physiologicalReaction direction="left-to-right" evidence="2">
        <dbReference type="Rhea" id="RHEA:59469"/>
    </physiologicalReaction>
</comment>
<comment type="pathway">
    <text evidence="2">Sulfur metabolism; glutathione metabolism.</text>
</comment>
<comment type="subunit">
    <text evidence="2">Heterodimer composed of the light and heavy chains. The active site is located in the light chain.</text>
</comment>
<comment type="subcellular location">
    <subcellularLocation>
        <location evidence="2">Membrane</location>
        <topology evidence="1">Single-pass type II membrane protein</topology>
    </subcellularLocation>
</comment>
<comment type="alternative products">
    <event type="alternative splicing"/>
    <isoform>
        <id>Q6PDE7-1</id>
        <name>1</name>
        <sequence type="displayed"/>
    </isoform>
    <isoform>
        <id>Q6PDE7-2</id>
        <name>2</name>
        <sequence type="described" ref="VSP_030452"/>
    </isoform>
</comment>
<comment type="PTM">
    <text evidence="2">Cleaved by autocatalysis into a large and a small subunit and the autocatalytic cleavage is essential to the functional activation of the enzyme.</text>
</comment>
<comment type="similarity">
    <text evidence="5">Belongs to the gamma-glutamyltransferase family.</text>
</comment>
<comment type="sequence caution" evidence="5">
    <conflict type="erroneous termination">
        <sequence resource="EMBL-CDS" id="BAB31233"/>
    </conflict>
    <text>Truncated C-terminus.</text>
</comment>
<comment type="sequence caution" evidence="5">
    <conflict type="frameshift">
        <sequence resource="EMBL-CDS" id="BAB31233"/>
    </conflict>
</comment>